<organism>
    <name type="scientific">Bacillus anthracis</name>
    <dbReference type="NCBI Taxonomy" id="1392"/>
    <lineage>
        <taxon>Bacteria</taxon>
        <taxon>Bacillati</taxon>
        <taxon>Bacillota</taxon>
        <taxon>Bacilli</taxon>
        <taxon>Bacillales</taxon>
        <taxon>Bacillaceae</taxon>
        <taxon>Bacillus</taxon>
        <taxon>Bacillus cereus group</taxon>
    </lineage>
</organism>
<sequence>MSNMQQKTDVILIGAGIMSATLGSLLKELAPEWEIKVFEKLASAGEESSNEWNNAGTGHSALCELNYTSEKSDGSIDISKAVKVNEQFQLSRQFWAYLVKSKLIRNPQDFIMPLPHMSLVQGEKNVEFLKNRFEALSKNPLFQGMEFSDAPETLKKWLPLIMEGRTSNEPMAATKIDSGTDVNFGALTRMLFDYLKTKDVELNYKHSVENIKRTKNGLWEVKVHDMNSGKIEHHTAKFVFIGGGGGSLPLLQKTGIPESKHIGGFPVSGLFMVCKNQKVVEQHHAKVYGKAKVGAPPMSVPHLDTRYIDNKKALLFGPFAGFSPKFLKTGSNLDLIGSVKPNNVLTMLAAGVKEMGLTKYLIQQVMLSHEKRMEELREFIPNAKSEDWDIVVAGQRVQVIKDTDAGGKGTLQFGTEVVSAADGSIAALLGASPGASTAVHVMLEVLEKCFPSRMVEWEGKIKEMIPSYGISLTENPRLFQDLHTSTGRTLGLNEKETVHN</sequence>
<dbReference type="EC" id="1.1.5.4" evidence="1"/>
<dbReference type="EMBL" id="AE016879">
    <property type="protein sequence ID" value="AAP26794.1"/>
    <property type="molecule type" value="Genomic_DNA"/>
</dbReference>
<dbReference type="EMBL" id="AE017334">
    <property type="protein sequence ID" value="AAT32091.1"/>
    <property type="molecule type" value="Genomic_DNA"/>
</dbReference>
<dbReference type="EMBL" id="AE017225">
    <property type="protein sequence ID" value="AAT55071.1"/>
    <property type="molecule type" value="Genomic_DNA"/>
</dbReference>
<dbReference type="RefSeq" id="NP_845308.1">
    <property type="nucleotide sequence ID" value="NC_003997.3"/>
</dbReference>
<dbReference type="RefSeq" id="WP_000069158.1">
    <property type="nucleotide sequence ID" value="NZ_WXXJ01000017.1"/>
</dbReference>
<dbReference type="RefSeq" id="YP_029020.1">
    <property type="nucleotide sequence ID" value="NC_005945.1"/>
</dbReference>
<dbReference type="SMR" id="Q81P44"/>
<dbReference type="STRING" id="261594.GBAA_2974"/>
<dbReference type="DNASU" id="1088569"/>
<dbReference type="GeneID" id="45022788"/>
<dbReference type="KEGG" id="ban:BA_2974"/>
<dbReference type="KEGG" id="bar:GBAA_2974"/>
<dbReference type="KEGG" id="bat:BAS2762"/>
<dbReference type="PATRIC" id="fig|198094.11.peg.2953"/>
<dbReference type="eggNOG" id="COG0579">
    <property type="taxonomic scope" value="Bacteria"/>
</dbReference>
<dbReference type="HOGENOM" id="CLU_028151_0_0_9"/>
<dbReference type="OMA" id="PHLDTRW"/>
<dbReference type="OrthoDB" id="9763983at2"/>
<dbReference type="UniPathway" id="UPA00223">
    <property type="reaction ID" value="UER01008"/>
</dbReference>
<dbReference type="Proteomes" id="UP000000427">
    <property type="component" value="Chromosome"/>
</dbReference>
<dbReference type="Proteomes" id="UP000000594">
    <property type="component" value="Chromosome"/>
</dbReference>
<dbReference type="GO" id="GO:0047545">
    <property type="term" value="F:2-hydroxyglutarate dehydrogenase activity"/>
    <property type="evidence" value="ECO:0007669"/>
    <property type="project" value="TreeGrafter"/>
</dbReference>
<dbReference type="GO" id="GO:0008924">
    <property type="term" value="F:L-malate dehydrogenase (quinone) activity"/>
    <property type="evidence" value="ECO:0007669"/>
    <property type="project" value="UniProtKB-UniRule"/>
</dbReference>
<dbReference type="GO" id="GO:0006099">
    <property type="term" value="P:tricarboxylic acid cycle"/>
    <property type="evidence" value="ECO:0007669"/>
    <property type="project" value="UniProtKB-UniRule"/>
</dbReference>
<dbReference type="HAMAP" id="MF_00212">
    <property type="entry name" value="MQO"/>
    <property type="match status" value="1"/>
</dbReference>
<dbReference type="InterPro" id="IPR036188">
    <property type="entry name" value="FAD/NAD-bd_sf"/>
</dbReference>
<dbReference type="InterPro" id="IPR006231">
    <property type="entry name" value="MQO"/>
</dbReference>
<dbReference type="NCBIfam" id="TIGR01320">
    <property type="entry name" value="mal_quin_oxido"/>
    <property type="match status" value="1"/>
</dbReference>
<dbReference type="NCBIfam" id="NF003603">
    <property type="entry name" value="PRK05257.1-1"/>
    <property type="match status" value="1"/>
</dbReference>
<dbReference type="NCBIfam" id="NF003604">
    <property type="entry name" value="PRK05257.1-3"/>
    <property type="match status" value="1"/>
</dbReference>
<dbReference type="NCBIfam" id="NF003605">
    <property type="entry name" value="PRK05257.1-4"/>
    <property type="match status" value="1"/>
</dbReference>
<dbReference type="NCBIfam" id="NF003606">
    <property type="entry name" value="PRK05257.2-1"/>
    <property type="match status" value="1"/>
</dbReference>
<dbReference type="NCBIfam" id="NF003608">
    <property type="entry name" value="PRK05257.2-4"/>
    <property type="match status" value="1"/>
</dbReference>
<dbReference type="NCBIfam" id="NF003610">
    <property type="entry name" value="PRK05257.3-1"/>
    <property type="match status" value="1"/>
</dbReference>
<dbReference type="NCBIfam" id="NF003611">
    <property type="entry name" value="PRK05257.3-2"/>
    <property type="match status" value="1"/>
</dbReference>
<dbReference type="NCBIfam" id="NF009875">
    <property type="entry name" value="PRK13339.1"/>
    <property type="match status" value="1"/>
</dbReference>
<dbReference type="PANTHER" id="PTHR43104">
    <property type="entry name" value="L-2-HYDROXYGLUTARATE DEHYDROGENASE, MITOCHONDRIAL"/>
    <property type="match status" value="1"/>
</dbReference>
<dbReference type="PANTHER" id="PTHR43104:SF2">
    <property type="entry name" value="L-2-HYDROXYGLUTARATE DEHYDROGENASE, MITOCHONDRIAL"/>
    <property type="match status" value="1"/>
</dbReference>
<dbReference type="Pfam" id="PF06039">
    <property type="entry name" value="Mqo"/>
    <property type="match status" value="1"/>
</dbReference>
<dbReference type="SUPFAM" id="SSF51905">
    <property type="entry name" value="FAD/NAD(P)-binding domain"/>
    <property type="match status" value="1"/>
</dbReference>
<proteinExistence type="inferred from homology"/>
<comment type="catalytic activity">
    <reaction evidence="1">
        <text>(S)-malate + a quinone = a quinol + oxaloacetate</text>
        <dbReference type="Rhea" id="RHEA:46012"/>
        <dbReference type="ChEBI" id="CHEBI:15589"/>
        <dbReference type="ChEBI" id="CHEBI:16452"/>
        <dbReference type="ChEBI" id="CHEBI:24646"/>
        <dbReference type="ChEBI" id="CHEBI:132124"/>
        <dbReference type="EC" id="1.1.5.4"/>
    </reaction>
</comment>
<comment type="cofactor">
    <cofactor evidence="1">
        <name>FAD</name>
        <dbReference type="ChEBI" id="CHEBI:57692"/>
    </cofactor>
</comment>
<comment type="pathway">
    <text evidence="1">Carbohydrate metabolism; tricarboxylic acid cycle; oxaloacetate from (S)-malate (quinone route): step 1/1.</text>
</comment>
<comment type="similarity">
    <text evidence="1">Belongs to the MQO family.</text>
</comment>
<accession>Q81P44</accession>
<accession>Q6HXB8</accession>
<accession>Q6KRD7</accession>
<name>MQO_BACAN</name>
<gene>
    <name evidence="1" type="primary">mqo</name>
    <name type="ordered locus">BA_2974</name>
    <name type="ordered locus">GBAA_2974</name>
    <name type="ordered locus">BAS2762</name>
</gene>
<feature type="chain" id="PRO_0000128704" description="Probable malate:quinone oxidoreductase">
    <location>
        <begin position="1"/>
        <end position="500"/>
    </location>
</feature>
<evidence type="ECO:0000255" key="1">
    <source>
        <dbReference type="HAMAP-Rule" id="MF_00212"/>
    </source>
</evidence>
<keyword id="KW-0274">FAD</keyword>
<keyword id="KW-0285">Flavoprotein</keyword>
<keyword id="KW-0560">Oxidoreductase</keyword>
<keyword id="KW-1185">Reference proteome</keyword>
<keyword id="KW-0816">Tricarboxylic acid cycle</keyword>
<protein>
    <recommendedName>
        <fullName evidence="1">Probable malate:quinone oxidoreductase</fullName>
        <ecNumber evidence="1">1.1.5.4</ecNumber>
    </recommendedName>
    <alternativeName>
        <fullName evidence="1">MQO</fullName>
    </alternativeName>
    <alternativeName>
        <fullName evidence="1">Malate dehydrogenase [quinone]</fullName>
    </alternativeName>
</protein>
<reference key="1">
    <citation type="journal article" date="2003" name="Nature">
        <title>The genome sequence of Bacillus anthracis Ames and comparison to closely related bacteria.</title>
        <authorList>
            <person name="Read T.D."/>
            <person name="Peterson S.N."/>
            <person name="Tourasse N.J."/>
            <person name="Baillie L.W."/>
            <person name="Paulsen I.T."/>
            <person name="Nelson K.E."/>
            <person name="Tettelin H."/>
            <person name="Fouts D.E."/>
            <person name="Eisen J.A."/>
            <person name="Gill S.R."/>
            <person name="Holtzapple E.K."/>
            <person name="Okstad O.A."/>
            <person name="Helgason E."/>
            <person name="Rilstone J."/>
            <person name="Wu M."/>
            <person name="Kolonay J.F."/>
            <person name="Beanan M.J."/>
            <person name="Dodson R.J."/>
            <person name="Brinkac L.M."/>
            <person name="Gwinn M.L."/>
            <person name="DeBoy R.T."/>
            <person name="Madpu R."/>
            <person name="Daugherty S.C."/>
            <person name="Durkin A.S."/>
            <person name="Haft D.H."/>
            <person name="Nelson W.C."/>
            <person name="Peterson J.D."/>
            <person name="Pop M."/>
            <person name="Khouri H.M."/>
            <person name="Radune D."/>
            <person name="Benton J.L."/>
            <person name="Mahamoud Y."/>
            <person name="Jiang L."/>
            <person name="Hance I.R."/>
            <person name="Weidman J.F."/>
            <person name="Berry K.J."/>
            <person name="Plaut R.D."/>
            <person name="Wolf A.M."/>
            <person name="Watkins K.L."/>
            <person name="Nierman W.C."/>
            <person name="Hazen A."/>
            <person name="Cline R.T."/>
            <person name="Redmond C."/>
            <person name="Thwaite J.E."/>
            <person name="White O."/>
            <person name="Salzberg S.L."/>
            <person name="Thomason B."/>
            <person name="Friedlander A.M."/>
            <person name="Koehler T.M."/>
            <person name="Hanna P.C."/>
            <person name="Kolstoe A.-B."/>
            <person name="Fraser C.M."/>
        </authorList>
    </citation>
    <scope>NUCLEOTIDE SEQUENCE [LARGE SCALE GENOMIC DNA]</scope>
    <source>
        <strain>Ames / isolate Porton</strain>
    </source>
</reference>
<reference key="2">
    <citation type="journal article" date="2009" name="J. Bacteriol.">
        <title>The complete genome sequence of Bacillus anthracis Ames 'Ancestor'.</title>
        <authorList>
            <person name="Ravel J."/>
            <person name="Jiang L."/>
            <person name="Stanley S.T."/>
            <person name="Wilson M.R."/>
            <person name="Decker R.S."/>
            <person name="Read T.D."/>
            <person name="Worsham P."/>
            <person name="Keim P.S."/>
            <person name="Salzberg S.L."/>
            <person name="Fraser-Liggett C.M."/>
            <person name="Rasko D.A."/>
        </authorList>
    </citation>
    <scope>NUCLEOTIDE SEQUENCE [LARGE SCALE GENOMIC DNA]</scope>
    <source>
        <strain>Ames ancestor</strain>
    </source>
</reference>
<reference key="3">
    <citation type="submission" date="2004-01" db="EMBL/GenBank/DDBJ databases">
        <title>Complete genome sequence of Bacillus anthracis Sterne.</title>
        <authorList>
            <person name="Brettin T.S."/>
            <person name="Bruce D."/>
            <person name="Challacombe J.F."/>
            <person name="Gilna P."/>
            <person name="Han C."/>
            <person name="Hill K."/>
            <person name="Hitchcock P."/>
            <person name="Jackson P."/>
            <person name="Keim P."/>
            <person name="Longmire J."/>
            <person name="Lucas S."/>
            <person name="Okinaka R."/>
            <person name="Richardson P."/>
            <person name="Rubin E."/>
            <person name="Tice H."/>
        </authorList>
    </citation>
    <scope>NUCLEOTIDE SEQUENCE [LARGE SCALE GENOMIC DNA]</scope>
    <source>
        <strain>Sterne</strain>
    </source>
</reference>